<dbReference type="EC" id="3.1.2.-" evidence="6"/>
<dbReference type="EMBL" id="CM000586">
    <property type="protein sequence ID" value="EWG52304.1"/>
    <property type="molecule type" value="Genomic_DNA"/>
</dbReference>
<dbReference type="RefSeq" id="XP_018758495.1">
    <property type="nucleotide sequence ID" value="XM_018900245.1"/>
</dbReference>
<dbReference type="SMR" id="W7MWX7"/>
<dbReference type="ESTHER" id="gibf5-fus5">
    <property type="family name" value="FSH1"/>
</dbReference>
<dbReference type="EnsemblFungi" id="FVEG_11082T0">
    <property type="protein sequence ID" value="FVEG_11082T0"/>
    <property type="gene ID" value="FVEG_11082"/>
</dbReference>
<dbReference type="GeneID" id="30068618"/>
<dbReference type="KEGG" id="fvr:FVEG_11082"/>
<dbReference type="VEuPathDB" id="FungiDB:FVEG_11082"/>
<dbReference type="eggNOG" id="KOG2551">
    <property type="taxonomic scope" value="Eukaryota"/>
</dbReference>
<dbReference type="HOGENOM" id="CLU_051938_0_2_1"/>
<dbReference type="OMA" id="PYSCWVS"/>
<dbReference type="OrthoDB" id="7223at110618"/>
<dbReference type="Proteomes" id="UP000009096">
    <property type="component" value="Chromosome 9"/>
</dbReference>
<dbReference type="GO" id="GO:0005737">
    <property type="term" value="C:cytoplasm"/>
    <property type="evidence" value="ECO:0007669"/>
    <property type="project" value="TreeGrafter"/>
</dbReference>
<dbReference type="GO" id="GO:0005634">
    <property type="term" value="C:nucleus"/>
    <property type="evidence" value="ECO:0007669"/>
    <property type="project" value="TreeGrafter"/>
</dbReference>
<dbReference type="GO" id="GO:0016787">
    <property type="term" value="F:hydrolase activity"/>
    <property type="evidence" value="ECO:0007669"/>
    <property type="project" value="UniProtKB-KW"/>
</dbReference>
<dbReference type="GO" id="GO:0044550">
    <property type="term" value="P:secondary metabolite biosynthetic process"/>
    <property type="evidence" value="ECO:0007669"/>
    <property type="project" value="TreeGrafter"/>
</dbReference>
<dbReference type="Gene3D" id="3.40.50.1820">
    <property type="entry name" value="alpha/beta hydrolase"/>
    <property type="match status" value="1"/>
</dbReference>
<dbReference type="InterPro" id="IPR029058">
    <property type="entry name" value="AB_hydrolase_fold"/>
</dbReference>
<dbReference type="InterPro" id="IPR005645">
    <property type="entry name" value="FSH-like_dom"/>
</dbReference>
<dbReference type="InterPro" id="IPR050593">
    <property type="entry name" value="LovG"/>
</dbReference>
<dbReference type="PANTHER" id="PTHR48070:SF3">
    <property type="entry name" value="ESTERASE DBAE-RELATED"/>
    <property type="match status" value="1"/>
</dbReference>
<dbReference type="PANTHER" id="PTHR48070">
    <property type="entry name" value="ESTERASE OVCA2"/>
    <property type="match status" value="1"/>
</dbReference>
<dbReference type="Pfam" id="PF03959">
    <property type="entry name" value="FSH1"/>
    <property type="match status" value="1"/>
</dbReference>
<dbReference type="SUPFAM" id="SSF53474">
    <property type="entry name" value="alpha/beta-Hydrolases"/>
    <property type="match status" value="1"/>
</dbReference>
<accession>W7MWX7</accession>
<reference key="1">
    <citation type="journal article" date="2010" name="Nature">
        <title>Comparative genomics reveals mobile pathogenicity chromosomes in Fusarium.</title>
        <authorList>
            <person name="Ma L.-J."/>
            <person name="van der Does H.C."/>
            <person name="Borkovich K.A."/>
            <person name="Coleman J.J."/>
            <person name="Daboussi M.-J."/>
            <person name="Di Pietro A."/>
            <person name="Dufresne M."/>
            <person name="Freitag M."/>
            <person name="Grabherr M."/>
            <person name="Henrissat B."/>
            <person name="Houterman P.M."/>
            <person name="Kang S."/>
            <person name="Shim W.-B."/>
            <person name="Woloshuk C."/>
            <person name="Xie X."/>
            <person name="Xu J.-R."/>
            <person name="Antoniw J."/>
            <person name="Baker S.E."/>
            <person name="Bluhm B.H."/>
            <person name="Breakspear A."/>
            <person name="Brown D.W."/>
            <person name="Butchko R.A.E."/>
            <person name="Chapman S."/>
            <person name="Coulson R."/>
            <person name="Coutinho P.M."/>
            <person name="Danchin E.G.J."/>
            <person name="Diener A."/>
            <person name="Gale L.R."/>
            <person name="Gardiner D.M."/>
            <person name="Goff S."/>
            <person name="Hammond-Kosack K.E."/>
            <person name="Hilburn K."/>
            <person name="Hua-Van A."/>
            <person name="Jonkers W."/>
            <person name="Kazan K."/>
            <person name="Kodira C.D."/>
            <person name="Koehrsen M."/>
            <person name="Kumar L."/>
            <person name="Lee Y.-H."/>
            <person name="Li L."/>
            <person name="Manners J.M."/>
            <person name="Miranda-Saavedra D."/>
            <person name="Mukherjee M."/>
            <person name="Park G."/>
            <person name="Park J."/>
            <person name="Park S.-Y."/>
            <person name="Proctor R.H."/>
            <person name="Regev A."/>
            <person name="Ruiz-Roldan M.C."/>
            <person name="Sain D."/>
            <person name="Sakthikumar S."/>
            <person name="Sykes S."/>
            <person name="Schwartz D.C."/>
            <person name="Turgeon B.G."/>
            <person name="Wapinski I."/>
            <person name="Yoder O."/>
            <person name="Young S."/>
            <person name="Zeng Q."/>
            <person name="Zhou S."/>
            <person name="Galagan J."/>
            <person name="Cuomo C.A."/>
            <person name="Kistler H.C."/>
            <person name="Rep M."/>
        </authorList>
    </citation>
    <scope>NUCLEOTIDE SEQUENCE [LARGE SCALE GENOMIC DNA]</scope>
    <source>
        <strain>M3125 / FGSC 7600</strain>
    </source>
</reference>
<reference key="2">
    <citation type="journal article" date="2012" name="Fungal Genet. Biol.">
        <title>Identification of gene clusters associated with fusaric acid, fusarin, and perithecial pigment production in Fusarium verticillioides.</title>
        <authorList>
            <person name="Brown D.W."/>
            <person name="Butchko R.A."/>
            <person name="Busman M."/>
            <person name="Proctor R.H."/>
        </authorList>
    </citation>
    <scope>FUNCTION</scope>
</reference>
<sequence>MVHRPRLLCLHGGGASSQIMRIQFSKLESALRKTFQLVFLEGPLDSAPGPGVLPFFKDFGPYSCWVSDDRSLSPEEKRQEETNAIAYIKTFMLQYGPFAGILGFSQGARAAASILLEQQREAFTHDSLFGVFFCGTFPPFIPDAPDISLPTIHVLGLTDPYLRESEVLLEHCTQQSVRRVIKFNGGHHMPTSSDVTQQIADVISMTYRTSQRKRVSGIWKKNVVDSRPSALEI</sequence>
<gene>
    <name evidence="5" type="primary">FUS5</name>
    <name type="ORF">FVEG_11082</name>
</gene>
<evidence type="ECO:0000250" key="1">
    <source>
        <dbReference type="UniProtKB" id="P38777"/>
    </source>
</evidence>
<evidence type="ECO:0000250" key="2">
    <source>
        <dbReference type="UniProtKB" id="Q0C8M2"/>
    </source>
</evidence>
<evidence type="ECO:0000250" key="3">
    <source>
        <dbReference type="UniProtKB" id="S0EES1"/>
    </source>
</evidence>
<evidence type="ECO:0000269" key="4">
    <source>
    </source>
</evidence>
<evidence type="ECO:0000303" key="5">
    <source>
    </source>
</evidence>
<evidence type="ECO:0000305" key="6"/>
<comment type="function">
    <text evidence="3 4">Esterase; part of the gene cluster that mediates the biosynthesis of the mycotoxin fusarin C (PubMed:22652150). Within the cluster, FUS1, FUS2, FUS8 and FUS9 are sufficient for fusarin production (By similarity). The other FUS cluster members are not essential for fusarin C biosynthesis (By similarity).</text>
</comment>
<comment type="similarity">
    <text evidence="6">Belongs to the LovG family.</text>
</comment>
<protein>
    <recommendedName>
        <fullName evidence="2">Esterase FUS5</fullName>
        <ecNumber evidence="6">3.1.2.-</ecNumber>
    </recommendedName>
    <alternativeName>
        <fullName evidence="5">Fusarin biosynthesis protein 5</fullName>
    </alternativeName>
</protein>
<proteinExistence type="inferred from homology"/>
<keyword id="KW-0378">Hydrolase</keyword>
<keyword id="KW-1185">Reference proteome</keyword>
<name>FUS5_GIBM7</name>
<feature type="chain" id="PRO_0000437370" description="Esterase FUS5">
    <location>
        <begin position="1"/>
        <end position="233"/>
    </location>
</feature>
<feature type="active site" description="Charge relay system" evidence="1">
    <location>
        <position position="105"/>
    </location>
</feature>
<feature type="active site" description="Charge relay system" evidence="1">
    <location>
        <position position="159"/>
    </location>
</feature>
<feature type="active site" description="Charge relay system" evidence="1">
    <location>
        <position position="187"/>
    </location>
</feature>
<organism>
    <name type="scientific">Gibberella moniliformis (strain M3125 / FGSC 7600)</name>
    <name type="common">Maize ear and stalk rot fungus</name>
    <name type="synonym">Fusarium verticillioides</name>
    <dbReference type="NCBI Taxonomy" id="334819"/>
    <lineage>
        <taxon>Eukaryota</taxon>
        <taxon>Fungi</taxon>
        <taxon>Dikarya</taxon>
        <taxon>Ascomycota</taxon>
        <taxon>Pezizomycotina</taxon>
        <taxon>Sordariomycetes</taxon>
        <taxon>Hypocreomycetidae</taxon>
        <taxon>Hypocreales</taxon>
        <taxon>Nectriaceae</taxon>
        <taxon>Fusarium</taxon>
        <taxon>Fusarium fujikuroi species complex</taxon>
    </lineage>
</organism>